<protein>
    <recommendedName>
        <fullName>RNA polymerase II-associated factor 1 homolog</fullName>
    </recommendedName>
</protein>
<name>PAF1_XENLA</name>
<sequence length="524" mass="59605">MAPTIQTQAQREDGHRSSSHRTVPERSGVVCRVKYCNTLPDIPFDPKFITYPFDQNRFVQYKATSLEKQHKHDLLTEPDLGVTIDLINPDTYRIDPNVTLDFADEKLLEEEIQAPSSSKRSQQHAKVVPWMRKTEYISTEFNRYGVSNEKPEVKIGVSVKQQFTEEDIYKDRDSQISAIEKTFDDAQKDISQHYSKPRVTPVEVMPVFPDFKMWINPCAQVIFDSDPAPKDASGTAALDMMSQAMIRGMMDEEGNQFVAYFLPGEDTMRKRKRDQEEGLDYMPEDIYDYKIAREYNWNVKNKASKGYEENYFFIFREGDGVYYNELETRVRLSKRRVKAGVQSGTNALLVVKHRDMHEKELEAQEARRAQLENHEPEEEEEIEVDRDTQGSDAEEGEKGSGSEKEGSGAEQSGSESEREGAEEEEKEDEQEKESSEDDRAARDKEEIFGSDDDDDDDDSDEDGHNESGQDGEDSGSDEEEEKGQGRRSRSASSSPFGSDRSQQENEDQSASDQGSGSSDGSDSD</sequence>
<gene>
    <name type="primary">paf1</name>
</gene>
<keyword id="KW-0175">Coiled coil</keyword>
<keyword id="KW-0539">Nucleus</keyword>
<keyword id="KW-1185">Reference proteome</keyword>
<keyword id="KW-0804">Transcription</keyword>
<keyword id="KW-0805">Transcription regulation</keyword>
<accession>A2BD83</accession>
<reference key="1">
    <citation type="submission" date="2005-12" db="EMBL/GenBank/DDBJ databases">
        <authorList>
            <consortium name="NIH - Xenopus Gene Collection (XGC) project"/>
        </authorList>
    </citation>
    <scope>NUCLEOTIDE SEQUENCE [LARGE SCALE MRNA]</scope>
    <source>
        <tissue>Testis</tissue>
    </source>
</reference>
<feature type="chain" id="PRO_0000326405" description="RNA polymerase II-associated factor 1 homolog">
    <location>
        <begin position="1"/>
        <end position="524"/>
    </location>
</feature>
<feature type="region of interest" description="Disordered" evidence="5">
    <location>
        <begin position="1"/>
        <end position="23"/>
    </location>
</feature>
<feature type="region of interest" description="Disordered" evidence="5">
    <location>
        <begin position="359"/>
        <end position="524"/>
    </location>
</feature>
<feature type="coiled-coil region" evidence="4">
    <location>
        <begin position="351"/>
        <end position="384"/>
    </location>
</feature>
<feature type="coiled-coil region" evidence="4">
    <location>
        <begin position="412"/>
        <end position="442"/>
    </location>
</feature>
<feature type="compositionally biased region" description="Basic and acidic residues" evidence="5">
    <location>
        <begin position="359"/>
        <end position="374"/>
    </location>
</feature>
<feature type="compositionally biased region" description="Acidic residues" evidence="5">
    <location>
        <begin position="375"/>
        <end position="384"/>
    </location>
</feature>
<feature type="compositionally biased region" description="Basic and acidic residues" evidence="5">
    <location>
        <begin position="396"/>
        <end position="407"/>
    </location>
</feature>
<feature type="compositionally biased region" description="Acidic residues" evidence="5">
    <location>
        <begin position="420"/>
        <end position="436"/>
    </location>
</feature>
<feature type="compositionally biased region" description="Basic and acidic residues" evidence="5">
    <location>
        <begin position="437"/>
        <end position="447"/>
    </location>
</feature>
<feature type="compositionally biased region" description="Acidic residues" evidence="5">
    <location>
        <begin position="448"/>
        <end position="461"/>
    </location>
</feature>
<feature type="compositionally biased region" description="Acidic residues" evidence="5">
    <location>
        <begin position="468"/>
        <end position="481"/>
    </location>
</feature>
<feature type="compositionally biased region" description="Low complexity" evidence="5">
    <location>
        <begin position="490"/>
        <end position="500"/>
    </location>
</feature>
<feature type="compositionally biased region" description="Low complexity" evidence="5">
    <location>
        <begin position="510"/>
        <end position="524"/>
    </location>
</feature>
<dbReference type="EMBL" id="BC130057">
    <property type="protein sequence ID" value="AAI30058.1"/>
    <property type="molecule type" value="mRNA"/>
</dbReference>
<dbReference type="RefSeq" id="NP_001086458.1">
    <property type="nucleotide sequence ID" value="NM_001092989.1"/>
</dbReference>
<dbReference type="SMR" id="A2BD83"/>
<dbReference type="BioGRID" id="103138">
    <property type="interactions" value="1"/>
</dbReference>
<dbReference type="IntAct" id="A2BD83">
    <property type="interactions" value="1"/>
</dbReference>
<dbReference type="DNASU" id="446278"/>
<dbReference type="GeneID" id="446278"/>
<dbReference type="KEGG" id="xla:446278"/>
<dbReference type="AGR" id="Xenbase:XB-GENE-5797702"/>
<dbReference type="CTD" id="446278"/>
<dbReference type="Xenbase" id="XB-GENE-5797702">
    <property type="gene designation" value="paf1.L"/>
</dbReference>
<dbReference type="OMA" id="LVCRIKY"/>
<dbReference type="OrthoDB" id="10260285at2759"/>
<dbReference type="Proteomes" id="UP000186698">
    <property type="component" value="Chromosome 8L"/>
</dbReference>
<dbReference type="Bgee" id="446278">
    <property type="expression patterns" value="Expressed in internal ear and 19 other cell types or tissues"/>
</dbReference>
<dbReference type="GO" id="GO:0016593">
    <property type="term" value="C:Cdc73/Paf1 complex"/>
    <property type="evidence" value="ECO:0000250"/>
    <property type="project" value="UniProtKB"/>
</dbReference>
<dbReference type="GO" id="GO:0003682">
    <property type="term" value="F:chromatin binding"/>
    <property type="evidence" value="ECO:0000318"/>
    <property type="project" value="GO_Central"/>
</dbReference>
<dbReference type="GO" id="GO:0000993">
    <property type="term" value="F:RNA polymerase II complex binding"/>
    <property type="evidence" value="ECO:0000250"/>
    <property type="project" value="UniProtKB"/>
</dbReference>
<dbReference type="GO" id="GO:0000122">
    <property type="term" value="P:negative regulation of transcription by RNA polymerase II"/>
    <property type="evidence" value="ECO:0000250"/>
    <property type="project" value="UniProtKB"/>
</dbReference>
<dbReference type="GO" id="GO:0006368">
    <property type="term" value="P:transcription elongation by RNA polymerase II"/>
    <property type="evidence" value="ECO:0000250"/>
    <property type="project" value="UniProtKB"/>
</dbReference>
<dbReference type="InterPro" id="IPR007133">
    <property type="entry name" value="RNA_pol_II-assoc_Paf1"/>
</dbReference>
<dbReference type="PANTHER" id="PTHR23188">
    <property type="entry name" value="RNA POLYMERASE II-ASSOCIATED FACTOR 1 HOMOLOG"/>
    <property type="match status" value="1"/>
</dbReference>
<dbReference type="PANTHER" id="PTHR23188:SF12">
    <property type="entry name" value="RNA POLYMERASE II-ASSOCIATED FACTOR 1 HOMOLOG"/>
    <property type="match status" value="1"/>
</dbReference>
<dbReference type="Pfam" id="PF03985">
    <property type="entry name" value="Paf1"/>
    <property type="match status" value="1"/>
</dbReference>
<organism>
    <name type="scientific">Xenopus laevis</name>
    <name type="common">African clawed frog</name>
    <dbReference type="NCBI Taxonomy" id="8355"/>
    <lineage>
        <taxon>Eukaryota</taxon>
        <taxon>Metazoa</taxon>
        <taxon>Chordata</taxon>
        <taxon>Craniata</taxon>
        <taxon>Vertebrata</taxon>
        <taxon>Euteleostomi</taxon>
        <taxon>Amphibia</taxon>
        <taxon>Batrachia</taxon>
        <taxon>Anura</taxon>
        <taxon>Pipoidea</taxon>
        <taxon>Pipidae</taxon>
        <taxon>Xenopodinae</taxon>
        <taxon>Xenopus</taxon>
        <taxon>Xenopus</taxon>
    </lineage>
</organism>
<evidence type="ECO:0000250" key="1"/>
<evidence type="ECO:0000250" key="2">
    <source>
        <dbReference type="UniProtKB" id="Q8K2T8"/>
    </source>
</evidence>
<evidence type="ECO:0000250" key="3">
    <source>
        <dbReference type="UniProtKB" id="Q8N7H5"/>
    </source>
</evidence>
<evidence type="ECO:0000255" key="4"/>
<evidence type="ECO:0000256" key="5">
    <source>
        <dbReference type="SAM" id="MobiDB-lite"/>
    </source>
</evidence>
<evidence type="ECO:0000305" key="6"/>
<proteinExistence type="evidence at transcript level"/>
<comment type="function">
    <text evidence="1">Component of the PAF1 complex (PAF1C) which has multiple functions during transcription by RNA polymerase II. PAF1C associates with RNA polymerase II, is involved in transcriptional elongation and in histone modifications including methylation on histone H3 'Lys-4' (H3K4me3) (By similarity).</text>
</comment>
<comment type="subunit">
    <text evidence="2 3">Component of the PAF1 complex, which at least consists of cdc73, paf1, leo1, ctr9 and rtf1 (By similarity). The PAF1 complex interacts with PHF5A (By similarity).</text>
</comment>
<comment type="subcellular location">
    <subcellularLocation>
        <location evidence="6">Nucleus</location>
    </subcellularLocation>
</comment>
<comment type="similarity">
    <text evidence="6">Belongs to the PAF1 family.</text>
</comment>